<organism>
    <name type="scientific">Methylocella silvestris (strain DSM 15510 / CIP 108128 / LMG 27833 / NCIMB 13906 / BL2)</name>
    <dbReference type="NCBI Taxonomy" id="395965"/>
    <lineage>
        <taxon>Bacteria</taxon>
        <taxon>Pseudomonadati</taxon>
        <taxon>Pseudomonadota</taxon>
        <taxon>Alphaproteobacteria</taxon>
        <taxon>Hyphomicrobiales</taxon>
        <taxon>Beijerinckiaceae</taxon>
        <taxon>Methylocella</taxon>
    </lineage>
</organism>
<keyword id="KW-1185">Reference proteome</keyword>
<keyword id="KW-0687">Ribonucleoprotein</keyword>
<keyword id="KW-0689">Ribosomal protein</keyword>
<keyword id="KW-0694">RNA-binding</keyword>
<keyword id="KW-0699">rRNA-binding</keyword>
<evidence type="ECO:0000255" key="1">
    <source>
        <dbReference type="HAMAP-Rule" id="MF_01302"/>
    </source>
</evidence>
<evidence type="ECO:0000305" key="2"/>
<dbReference type="EMBL" id="CP001280">
    <property type="protein sequence ID" value="ACK49538.1"/>
    <property type="molecule type" value="Genomic_DNA"/>
</dbReference>
<dbReference type="RefSeq" id="WP_012589608.1">
    <property type="nucleotide sequence ID" value="NC_011666.1"/>
</dbReference>
<dbReference type="SMR" id="B8ELE9"/>
<dbReference type="STRING" id="395965.Msil_0566"/>
<dbReference type="KEGG" id="msl:Msil_0566"/>
<dbReference type="eggNOG" id="COG0096">
    <property type="taxonomic scope" value="Bacteria"/>
</dbReference>
<dbReference type="HOGENOM" id="CLU_098428_0_0_5"/>
<dbReference type="OrthoDB" id="9802617at2"/>
<dbReference type="Proteomes" id="UP000002257">
    <property type="component" value="Chromosome"/>
</dbReference>
<dbReference type="GO" id="GO:1990904">
    <property type="term" value="C:ribonucleoprotein complex"/>
    <property type="evidence" value="ECO:0007669"/>
    <property type="project" value="UniProtKB-KW"/>
</dbReference>
<dbReference type="GO" id="GO:0005840">
    <property type="term" value="C:ribosome"/>
    <property type="evidence" value="ECO:0007669"/>
    <property type="project" value="UniProtKB-KW"/>
</dbReference>
<dbReference type="GO" id="GO:0019843">
    <property type="term" value="F:rRNA binding"/>
    <property type="evidence" value="ECO:0007669"/>
    <property type="project" value="UniProtKB-UniRule"/>
</dbReference>
<dbReference type="GO" id="GO:0003735">
    <property type="term" value="F:structural constituent of ribosome"/>
    <property type="evidence" value="ECO:0007669"/>
    <property type="project" value="InterPro"/>
</dbReference>
<dbReference type="GO" id="GO:0006412">
    <property type="term" value="P:translation"/>
    <property type="evidence" value="ECO:0007669"/>
    <property type="project" value="UniProtKB-UniRule"/>
</dbReference>
<dbReference type="FunFam" id="3.30.1370.30:FF:000002">
    <property type="entry name" value="30S ribosomal protein S8"/>
    <property type="match status" value="1"/>
</dbReference>
<dbReference type="FunFam" id="3.30.1490.10:FF:000001">
    <property type="entry name" value="30S ribosomal protein S8"/>
    <property type="match status" value="1"/>
</dbReference>
<dbReference type="Gene3D" id="3.30.1370.30">
    <property type="match status" value="1"/>
</dbReference>
<dbReference type="Gene3D" id="3.30.1490.10">
    <property type="match status" value="1"/>
</dbReference>
<dbReference type="HAMAP" id="MF_01302_B">
    <property type="entry name" value="Ribosomal_uS8_B"/>
    <property type="match status" value="1"/>
</dbReference>
<dbReference type="InterPro" id="IPR000630">
    <property type="entry name" value="Ribosomal_uS8"/>
</dbReference>
<dbReference type="InterPro" id="IPR047863">
    <property type="entry name" value="Ribosomal_uS8_CS"/>
</dbReference>
<dbReference type="InterPro" id="IPR035987">
    <property type="entry name" value="Ribosomal_uS8_sf"/>
</dbReference>
<dbReference type="NCBIfam" id="NF001109">
    <property type="entry name" value="PRK00136.1"/>
    <property type="match status" value="1"/>
</dbReference>
<dbReference type="PANTHER" id="PTHR11758">
    <property type="entry name" value="40S RIBOSOMAL PROTEIN S15A"/>
    <property type="match status" value="1"/>
</dbReference>
<dbReference type="Pfam" id="PF00410">
    <property type="entry name" value="Ribosomal_S8"/>
    <property type="match status" value="1"/>
</dbReference>
<dbReference type="SUPFAM" id="SSF56047">
    <property type="entry name" value="Ribosomal protein S8"/>
    <property type="match status" value="1"/>
</dbReference>
<dbReference type="PROSITE" id="PS00053">
    <property type="entry name" value="RIBOSOMAL_S8"/>
    <property type="match status" value="1"/>
</dbReference>
<feature type="chain" id="PRO_1000165340" description="Small ribosomal subunit protein uS8">
    <location>
        <begin position="1"/>
        <end position="132"/>
    </location>
</feature>
<protein>
    <recommendedName>
        <fullName evidence="1">Small ribosomal subunit protein uS8</fullName>
    </recommendedName>
    <alternativeName>
        <fullName evidence="2">30S ribosomal protein S8</fullName>
    </alternativeName>
</protein>
<comment type="function">
    <text evidence="1">One of the primary rRNA binding proteins, it binds directly to 16S rRNA central domain where it helps coordinate assembly of the platform of the 30S subunit.</text>
</comment>
<comment type="subunit">
    <text evidence="1">Part of the 30S ribosomal subunit. Contacts proteins S5 and S12.</text>
</comment>
<comment type="similarity">
    <text evidence="1">Belongs to the universal ribosomal protein uS8 family.</text>
</comment>
<sequence>MAVNDPLGDMLTRIRNAQMRRKGKVQTPGSRLRAHVLDVLQSEGYIRGYSTTEYGNGRTEFEVELKYFDGLPVIREIQRVSKPGRRVYAAVDAMPRVANGLGITIVSTPKGVMADHAAREANVGGEVLCRVF</sequence>
<reference key="1">
    <citation type="journal article" date="2010" name="J. Bacteriol.">
        <title>Complete genome sequence of the aerobic facultative methanotroph Methylocella silvestris BL2.</title>
        <authorList>
            <person name="Chen Y."/>
            <person name="Crombie A."/>
            <person name="Rahman M.T."/>
            <person name="Dedysh S.N."/>
            <person name="Liesack W."/>
            <person name="Stott M.B."/>
            <person name="Alam M."/>
            <person name="Theisen A.R."/>
            <person name="Murrell J.C."/>
            <person name="Dunfield P.F."/>
        </authorList>
    </citation>
    <scope>NUCLEOTIDE SEQUENCE [LARGE SCALE GENOMIC DNA]</scope>
    <source>
        <strain>DSM 15510 / CIP 108128 / LMG 27833 / NCIMB 13906 / BL2</strain>
    </source>
</reference>
<name>RS8_METSB</name>
<gene>
    <name evidence="1" type="primary">rpsH</name>
    <name type="ordered locus">Msil_0566</name>
</gene>
<proteinExistence type="inferred from homology"/>
<accession>B8ELE9</accession>